<comment type="similarity">
    <text evidence="1">Belongs to the universal ribosomal protein uL29 family.</text>
</comment>
<protein>
    <recommendedName>
        <fullName evidence="1">Large ribosomal subunit protein uL29</fullName>
    </recommendedName>
    <alternativeName>
        <fullName evidence="2">50S ribosomal protein L29</fullName>
    </alternativeName>
</protein>
<feature type="chain" id="PRO_1000079901" description="Large ribosomal subunit protein uL29">
    <location>
        <begin position="1"/>
        <end position="63"/>
    </location>
</feature>
<gene>
    <name evidence="1" type="primary">rpmC</name>
    <name type="ordered locus">SARI_04197</name>
</gene>
<dbReference type="EMBL" id="CP000880">
    <property type="protein sequence ID" value="ABX23986.1"/>
    <property type="molecule type" value="Genomic_DNA"/>
</dbReference>
<dbReference type="SMR" id="A9MN56"/>
<dbReference type="STRING" id="41514.SARI_04197"/>
<dbReference type="KEGG" id="ses:SARI_04197"/>
<dbReference type="HOGENOM" id="CLU_158491_1_2_6"/>
<dbReference type="Proteomes" id="UP000002084">
    <property type="component" value="Chromosome"/>
</dbReference>
<dbReference type="GO" id="GO:0022625">
    <property type="term" value="C:cytosolic large ribosomal subunit"/>
    <property type="evidence" value="ECO:0007669"/>
    <property type="project" value="TreeGrafter"/>
</dbReference>
<dbReference type="GO" id="GO:0003735">
    <property type="term" value="F:structural constituent of ribosome"/>
    <property type="evidence" value="ECO:0007669"/>
    <property type="project" value="InterPro"/>
</dbReference>
<dbReference type="GO" id="GO:0006412">
    <property type="term" value="P:translation"/>
    <property type="evidence" value="ECO:0007669"/>
    <property type="project" value="UniProtKB-UniRule"/>
</dbReference>
<dbReference type="CDD" id="cd00427">
    <property type="entry name" value="Ribosomal_L29_HIP"/>
    <property type="match status" value="1"/>
</dbReference>
<dbReference type="Gene3D" id="6.10.140.1970">
    <property type="match status" value="1"/>
</dbReference>
<dbReference type="HAMAP" id="MF_00374">
    <property type="entry name" value="Ribosomal_uL29"/>
    <property type="match status" value="1"/>
</dbReference>
<dbReference type="InterPro" id="IPR050063">
    <property type="entry name" value="Ribosomal_protein_uL29"/>
</dbReference>
<dbReference type="InterPro" id="IPR001854">
    <property type="entry name" value="Ribosomal_uL29"/>
</dbReference>
<dbReference type="InterPro" id="IPR018254">
    <property type="entry name" value="Ribosomal_uL29_CS"/>
</dbReference>
<dbReference type="InterPro" id="IPR036049">
    <property type="entry name" value="Ribosomal_uL29_sf"/>
</dbReference>
<dbReference type="NCBIfam" id="TIGR00012">
    <property type="entry name" value="L29"/>
    <property type="match status" value="1"/>
</dbReference>
<dbReference type="PANTHER" id="PTHR10916">
    <property type="entry name" value="60S RIBOSOMAL PROTEIN L35/50S RIBOSOMAL PROTEIN L29"/>
    <property type="match status" value="1"/>
</dbReference>
<dbReference type="PANTHER" id="PTHR10916:SF0">
    <property type="entry name" value="LARGE RIBOSOMAL SUBUNIT PROTEIN UL29C"/>
    <property type="match status" value="1"/>
</dbReference>
<dbReference type="Pfam" id="PF00831">
    <property type="entry name" value="Ribosomal_L29"/>
    <property type="match status" value="1"/>
</dbReference>
<dbReference type="SUPFAM" id="SSF46561">
    <property type="entry name" value="Ribosomal protein L29 (L29p)"/>
    <property type="match status" value="1"/>
</dbReference>
<dbReference type="PROSITE" id="PS00579">
    <property type="entry name" value="RIBOSOMAL_L29"/>
    <property type="match status" value="1"/>
</dbReference>
<name>RL29_SALAR</name>
<keyword id="KW-1185">Reference proteome</keyword>
<keyword id="KW-0687">Ribonucleoprotein</keyword>
<keyword id="KW-0689">Ribosomal protein</keyword>
<proteinExistence type="inferred from homology"/>
<organism>
    <name type="scientific">Salmonella arizonae (strain ATCC BAA-731 / CDC346-86 / RSK2980)</name>
    <dbReference type="NCBI Taxonomy" id="41514"/>
    <lineage>
        <taxon>Bacteria</taxon>
        <taxon>Pseudomonadati</taxon>
        <taxon>Pseudomonadota</taxon>
        <taxon>Gammaproteobacteria</taxon>
        <taxon>Enterobacterales</taxon>
        <taxon>Enterobacteriaceae</taxon>
        <taxon>Salmonella</taxon>
    </lineage>
</organism>
<sequence>MKAKELREKSVEELNTELLNLLREQFNLRMQAASGQLQQSHLLKQVRRDVARVKTLLTEKAGA</sequence>
<reference key="1">
    <citation type="submission" date="2007-11" db="EMBL/GenBank/DDBJ databases">
        <authorList>
            <consortium name="The Salmonella enterica serovar Arizonae Genome Sequencing Project"/>
            <person name="McClelland M."/>
            <person name="Sanderson E.K."/>
            <person name="Porwollik S."/>
            <person name="Spieth J."/>
            <person name="Clifton W.S."/>
            <person name="Fulton R."/>
            <person name="Chunyan W."/>
            <person name="Wollam A."/>
            <person name="Shah N."/>
            <person name="Pepin K."/>
            <person name="Bhonagiri V."/>
            <person name="Nash W."/>
            <person name="Johnson M."/>
            <person name="Thiruvilangam P."/>
            <person name="Wilson R."/>
        </authorList>
    </citation>
    <scope>NUCLEOTIDE SEQUENCE [LARGE SCALE GENOMIC DNA]</scope>
    <source>
        <strain>ATCC BAA-731 / CDC346-86 / RSK2980</strain>
    </source>
</reference>
<evidence type="ECO:0000255" key="1">
    <source>
        <dbReference type="HAMAP-Rule" id="MF_00374"/>
    </source>
</evidence>
<evidence type="ECO:0000305" key="2"/>
<accession>A9MN56</accession>